<evidence type="ECO:0000255" key="1">
    <source>
        <dbReference type="HAMAP-Rule" id="MF_00170"/>
    </source>
</evidence>
<dbReference type="EC" id="5.3.1.6" evidence="1"/>
<dbReference type="EMBL" id="CP000435">
    <property type="protein sequence ID" value="ABI46468.1"/>
    <property type="molecule type" value="Genomic_DNA"/>
</dbReference>
<dbReference type="RefSeq" id="WP_011620270.1">
    <property type="nucleotide sequence ID" value="NC_008319.1"/>
</dbReference>
<dbReference type="SMR" id="Q0I7L2"/>
<dbReference type="STRING" id="64471.sync_2363"/>
<dbReference type="KEGG" id="syg:sync_2363"/>
<dbReference type="eggNOG" id="COG0120">
    <property type="taxonomic scope" value="Bacteria"/>
</dbReference>
<dbReference type="HOGENOM" id="CLU_056590_1_1_3"/>
<dbReference type="OrthoDB" id="5870696at2"/>
<dbReference type="UniPathway" id="UPA00115">
    <property type="reaction ID" value="UER00412"/>
</dbReference>
<dbReference type="Proteomes" id="UP000001961">
    <property type="component" value="Chromosome"/>
</dbReference>
<dbReference type="GO" id="GO:0005829">
    <property type="term" value="C:cytosol"/>
    <property type="evidence" value="ECO:0007669"/>
    <property type="project" value="TreeGrafter"/>
</dbReference>
<dbReference type="GO" id="GO:0004751">
    <property type="term" value="F:ribose-5-phosphate isomerase activity"/>
    <property type="evidence" value="ECO:0007669"/>
    <property type="project" value="UniProtKB-UniRule"/>
</dbReference>
<dbReference type="GO" id="GO:0006014">
    <property type="term" value="P:D-ribose metabolic process"/>
    <property type="evidence" value="ECO:0007669"/>
    <property type="project" value="TreeGrafter"/>
</dbReference>
<dbReference type="GO" id="GO:0009052">
    <property type="term" value="P:pentose-phosphate shunt, non-oxidative branch"/>
    <property type="evidence" value="ECO:0007669"/>
    <property type="project" value="UniProtKB-UniRule"/>
</dbReference>
<dbReference type="CDD" id="cd01398">
    <property type="entry name" value="RPI_A"/>
    <property type="match status" value="1"/>
</dbReference>
<dbReference type="FunFam" id="3.30.70.260:FF:000018">
    <property type="entry name" value="Ribose-5-phosphate isomerase A"/>
    <property type="match status" value="1"/>
</dbReference>
<dbReference type="FunFam" id="3.40.50.1360:FF:000001">
    <property type="entry name" value="Ribose-5-phosphate isomerase A"/>
    <property type="match status" value="1"/>
</dbReference>
<dbReference type="Gene3D" id="3.30.70.260">
    <property type="match status" value="1"/>
</dbReference>
<dbReference type="Gene3D" id="3.40.50.1360">
    <property type="match status" value="1"/>
</dbReference>
<dbReference type="HAMAP" id="MF_00170">
    <property type="entry name" value="Rib_5P_isom_A"/>
    <property type="match status" value="1"/>
</dbReference>
<dbReference type="InterPro" id="IPR037171">
    <property type="entry name" value="NagB/RpiA_transferase-like"/>
</dbReference>
<dbReference type="InterPro" id="IPR020672">
    <property type="entry name" value="Ribose5P_isomerase_typA_subgr"/>
</dbReference>
<dbReference type="InterPro" id="IPR004788">
    <property type="entry name" value="Ribose5P_isomerase_type_A"/>
</dbReference>
<dbReference type="NCBIfam" id="NF001924">
    <property type="entry name" value="PRK00702.1"/>
    <property type="match status" value="1"/>
</dbReference>
<dbReference type="NCBIfam" id="TIGR00021">
    <property type="entry name" value="rpiA"/>
    <property type="match status" value="1"/>
</dbReference>
<dbReference type="PANTHER" id="PTHR11934">
    <property type="entry name" value="RIBOSE-5-PHOSPHATE ISOMERASE"/>
    <property type="match status" value="1"/>
</dbReference>
<dbReference type="PANTHER" id="PTHR11934:SF0">
    <property type="entry name" value="RIBOSE-5-PHOSPHATE ISOMERASE"/>
    <property type="match status" value="1"/>
</dbReference>
<dbReference type="Pfam" id="PF06026">
    <property type="entry name" value="Rib_5-P_isom_A"/>
    <property type="match status" value="1"/>
</dbReference>
<dbReference type="SUPFAM" id="SSF75445">
    <property type="entry name" value="D-ribose-5-phosphate isomerase (RpiA), lid domain"/>
    <property type="match status" value="1"/>
</dbReference>
<dbReference type="SUPFAM" id="SSF100950">
    <property type="entry name" value="NagB/RpiA/CoA transferase-like"/>
    <property type="match status" value="1"/>
</dbReference>
<comment type="function">
    <text evidence="1">Catalyzes the reversible conversion of ribose-5-phosphate to ribulose 5-phosphate.</text>
</comment>
<comment type="catalytic activity">
    <reaction evidence="1">
        <text>aldehydo-D-ribose 5-phosphate = D-ribulose 5-phosphate</text>
        <dbReference type="Rhea" id="RHEA:14657"/>
        <dbReference type="ChEBI" id="CHEBI:58121"/>
        <dbReference type="ChEBI" id="CHEBI:58273"/>
        <dbReference type="EC" id="5.3.1.6"/>
    </reaction>
</comment>
<comment type="pathway">
    <text evidence="1">Carbohydrate degradation; pentose phosphate pathway; D-ribose 5-phosphate from D-ribulose 5-phosphate (non-oxidative stage): step 1/1.</text>
</comment>
<comment type="subunit">
    <text evidence="1">Homodimer.</text>
</comment>
<comment type="similarity">
    <text evidence="1">Belongs to the ribose 5-phosphate isomerase family.</text>
</comment>
<organism>
    <name type="scientific">Synechococcus sp. (strain CC9311)</name>
    <dbReference type="NCBI Taxonomy" id="64471"/>
    <lineage>
        <taxon>Bacteria</taxon>
        <taxon>Bacillati</taxon>
        <taxon>Cyanobacteriota</taxon>
        <taxon>Cyanophyceae</taxon>
        <taxon>Synechococcales</taxon>
        <taxon>Synechococcaceae</taxon>
        <taxon>Synechococcus</taxon>
    </lineage>
</organism>
<sequence>MSDLQTQMKQAVAEAAVAQIRDGMVVGLGSGSTAALMIEGLGARLAAGQLRDIVGVTTSFQGEVLAAELGIPLRALNATDRIDLAIDGADEVDPSFQLIKGGGACHVQEKLVADRAERFIVVVDSTKLVRCLNLDFLLPVEVLPGAWVQVQSRLKSMGGVAELRMATRKAGPVVTDQGNLVLDVRFENGISDPIALERDINNLPGVLENGLFVNLADEVLVGEIKDGVAGVRSLDRVG</sequence>
<protein>
    <recommendedName>
        <fullName evidence="1">Ribose-5-phosphate isomerase A</fullName>
        <ecNumber evidence="1">5.3.1.6</ecNumber>
    </recommendedName>
    <alternativeName>
        <fullName evidence="1">Phosphoriboisomerase A</fullName>
        <shortName evidence="1">PRI</shortName>
    </alternativeName>
</protein>
<gene>
    <name evidence="1" type="primary">rpiA</name>
    <name type="ordered locus">sync_2363</name>
</gene>
<name>RPIA_SYNS3</name>
<accession>Q0I7L2</accession>
<feature type="chain" id="PRO_1000017020" description="Ribose-5-phosphate isomerase A">
    <location>
        <begin position="1"/>
        <end position="238"/>
    </location>
</feature>
<feature type="active site" description="Proton acceptor" evidence="1">
    <location>
        <position position="109"/>
    </location>
</feature>
<feature type="binding site" evidence="1">
    <location>
        <begin position="30"/>
        <end position="33"/>
    </location>
    <ligand>
        <name>substrate</name>
    </ligand>
</feature>
<feature type="binding site" evidence="1">
    <location>
        <begin position="87"/>
        <end position="90"/>
    </location>
    <ligand>
        <name>substrate</name>
    </ligand>
</feature>
<feature type="binding site" evidence="1">
    <location>
        <begin position="100"/>
        <end position="103"/>
    </location>
    <ligand>
        <name>substrate</name>
    </ligand>
</feature>
<feature type="binding site" evidence="1">
    <location>
        <position position="127"/>
    </location>
    <ligand>
        <name>substrate</name>
    </ligand>
</feature>
<proteinExistence type="inferred from homology"/>
<reference key="1">
    <citation type="journal article" date="2006" name="Proc. Natl. Acad. Sci. U.S.A.">
        <title>Genome sequence of Synechococcus CC9311: insights into adaptation to a coastal environment.</title>
        <authorList>
            <person name="Palenik B."/>
            <person name="Ren Q."/>
            <person name="Dupont C.L."/>
            <person name="Myers G.S."/>
            <person name="Heidelberg J.F."/>
            <person name="Badger J.H."/>
            <person name="Madupu R."/>
            <person name="Nelson W.C."/>
            <person name="Brinkac L.M."/>
            <person name="Dodson R.J."/>
            <person name="Durkin A.S."/>
            <person name="Daugherty S.C."/>
            <person name="Sullivan S.A."/>
            <person name="Khouri H."/>
            <person name="Mohamoud Y."/>
            <person name="Halpin R."/>
            <person name="Paulsen I.T."/>
        </authorList>
    </citation>
    <scope>NUCLEOTIDE SEQUENCE [LARGE SCALE GENOMIC DNA]</scope>
    <source>
        <strain>CC9311</strain>
    </source>
</reference>
<keyword id="KW-0413">Isomerase</keyword>
<keyword id="KW-1185">Reference proteome</keyword>